<accession>P36067</accession>
<comment type="miscellaneous">
    <text evidence="1">Partially overlaps RMA1.</text>
</comment>
<comment type="caution">
    <text evidence="2">Product of a dubious gene prediction unlikely to encode a functional protein. Because of that it is not part of the S.cerevisiae S288c complete/reference proteome set.</text>
</comment>
<gene>
    <name type="ordered locus">YKL131W</name>
</gene>
<dbReference type="EMBL" id="Z28131">
    <property type="protein sequence ID" value="CAA81973.1"/>
    <property type="molecule type" value="Genomic_DNA"/>
</dbReference>
<dbReference type="EMBL" id="AY693341">
    <property type="protein sequence ID" value="AAT93360.1"/>
    <property type="molecule type" value="Genomic_DNA"/>
</dbReference>
<dbReference type="PIR" id="S37960">
    <property type="entry name" value="S37960"/>
</dbReference>
<dbReference type="PaxDb" id="4932-YKL131W"/>
<dbReference type="EnsemblFungi" id="YKL131W_mRNA">
    <property type="protein sequence ID" value="YKL131W"/>
    <property type="gene ID" value="YKL131W"/>
</dbReference>
<dbReference type="AGR" id="SGD:S000001614"/>
<dbReference type="SGD" id="S000001614">
    <property type="gene designation" value="YKL131W"/>
</dbReference>
<dbReference type="HOGENOM" id="CLU_1548831_0_0_1"/>
<feature type="chain" id="PRO_0000203150" description="Putative uncharacterized protein YKL131W">
    <location>
        <begin position="1"/>
        <end position="173"/>
    </location>
</feature>
<evidence type="ECO:0000305" key="1"/>
<evidence type="ECO:0000305" key="2">
    <source>
    </source>
</evidence>
<reference key="1">
    <citation type="journal article" date="1994" name="Nature">
        <title>Complete DNA sequence of yeast chromosome XI.</title>
        <authorList>
            <person name="Dujon B."/>
            <person name="Alexandraki D."/>
            <person name="Andre B."/>
            <person name="Ansorge W."/>
            <person name="Baladron V."/>
            <person name="Ballesta J.P.G."/>
            <person name="Banrevi A."/>
            <person name="Bolle P.-A."/>
            <person name="Bolotin-Fukuhara M."/>
            <person name="Bossier P."/>
            <person name="Bou G."/>
            <person name="Boyer J."/>
            <person name="Buitrago M.J."/>
            <person name="Cheret G."/>
            <person name="Colleaux L."/>
            <person name="Daignan-Fornier B."/>
            <person name="del Rey F."/>
            <person name="Dion C."/>
            <person name="Domdey H."/>
            <person name="Duesterhoeft A."/>
            <person name="Duesterhus S."/>
            <person name="Entian K.-D."/>
            <person name="Erfle H."/>
            <person name="Esteban P.F."/>
            <person name="Feldmann H."/>
            <person name="Fernandes L."/>
            <person name="Fobo G.M."/>
            <person name="Fritz C."/>
            <person name="Fukuhara H."/>
            <person name="Gabel C."/>
            <person name="Gaillon L."/>
            <person name="Garcia-Cantalejo J.M."/>
            <person name="Garcia-Ramirez J.J."/>
            <person name="Gent M.E."/>
            <person name="Ghazvini M."/>
            <person name="Goffeau A."/>
            <person name="Gonzalez A."/>
            <person name="Grothues D."/>
            <person name="Guerreiro P."/>
            <person name="Hegemann J.H."/>
            <person name="Hewitt N."/>
            <person name="Hilger F."/>
            <person name="Hollenberg C.P."/>
            <person name="Horaitis O."/>
            <person name="Indge K.J."/>
            <person name="Jacquier A."/>
            <person name="James C.M."/>
            <person name="Jauniaux J.-C."/>
            <person name="Jimenez A."/>
            <person name="Keuchel H."/>
            <person name="Kirchrath L."/>
            <person name="Kleine K."/>
            <person name="Koetter P."/>
            <person name="Legrain P."/>
            <person name="Liebl S."/>
            <person name="Louis E.J."/>
            <person name="Maia e Silva A."/>
            <person name="Marck C."/>
            <person name="Monnier A.-L."/>
            <person name="Moestl D."/>
            <person name="Mueller S."/>
            <person name="Obermaier B."/>
            <person name="Oliver S.G."/>
            <person name="Pallier C."/>
            <person name="Pascolo S."/>
            <person name="Pfeiffer F."/>
            <person name="Philippsen P."/>
            <person name="Planta R.J."/>
            <person name="Pohl F.M."/>
            <person name="Pohl T.M."/>
            <person name="Poehlmann R."/>
            <person name="Portetelle D."/>
            <person name="Purnelle B."/>
            <person name="Puzos V."/>
            <person name="Ramezani Rad M."/>
            <person name="Rasmussen S.W."/>
            <person name="Remacha M.A."/>
            <person name="Revuelta J.L."/>
            <person name="Richard G.-F."/>
            <person name="Rieger M."/>
            <person name="Rodrigues-Pousada C."/>
            <person name="Rose M."/>
            <person name="Rupp T."/>
            <person name="Santos M.A."/>
            <person name="Schwager C."/>
            <person name="Sensen C."/>
            <person name="Skala J."/>
            <person name="Soares H."/>
            <person name="Sor F."/>
            <person name="Stegemann J."/>
            <person name="Tettelin H."/>
            <person name="Thierry A."/>
            <person name="Tzermia M."/>
            <person name="Urrestarazu L.A."/>
            <person name="van Dyck L."/>
            <person name="van Vliet-Reedijk J.C."/>
            <person name="Valens M."/>
            <person name="Vandenbol M."/>
            <person name="Vilela C."/>
            <person name="Vissers S."/>
            <person name="von Wettstein D."/>
            <person name="Voss H."/>
            <person name="Wiemann S."/>
            <person name="Xu G."/>
            <person name="Zimmermann J."/>
            <person name="Haasemann M."/>
            <person name="Becker I."/>
            <person name="Mewes H.-W."/>
        </authorList>
    </citation>
    <scope>NUCLEOTIDE SEQUENCE [LARGE SCALE GENOMIC DNA]</scope>
    <source>
        <strain>ATCC 204508 / S288c</strain>
    </source>
</reference>
<reference key="2">
    <citation type="journal article" date="2014" name="G3 (Bethesda)">
        <title>The reference genome sequence of Saccharomyces cerevisiae: Then and now.</title>
        <authorList>
            <person name="Engel S.R."/>
            <person name="Dietrich F.S."/>
            <person name="Fisk D.G."/>
            <person name="Binkley G."/>
            <person name="Balakrishnan R."/>
            <person name="Costanzo M.C."/>
            <person name="Dwight S.S."/>
            <person name="Hitz B.C."/>
            <person name="Karra K."/>
            <person name="Nash R.S."/>
            <person name="Weng S."/>
            <person name="Wong E.D."/>
            <person name="Lloyd P."/>
            <person name="Skrzypek M.S."/>
            <person name="Miyasato S.R."/>
            <person name="Simison M."/>
            <person name="Cherry J.M."/>
        </authorList>
    </citation>
    <scope>GENOME REANNOTATION</scope>
    <source>
        <strain>ATCC 204508 / S288c</strain>
    </source>
</reference>
<reference key="3">
    <citation type="journal article" date="2007" name="Genome Res.">
        <title>Approaching a complete repository of sequence-verified protein-encoding clones for Saccharomyces cerevisiae.</title>
        <authorList>
            <person name="Hu Y."/>
            <person name="Rolfs A."/>
            <person name="Bhullar B."/>
            <person name="Murthy T.V.S."/>
            <person name="Zhu C."/>
            <person name="Berger M.F."/>
            <person name="Camargo A.A."/>
            <person name="Kelley F."/>
            <person name="McCarron S."/>
            <person name="Jepson D."/>
            <person name="Richardson A."/>
            <person name="Raphael J."/>
            <person name="Moreira D."/>
            <person name="Taycher E."/>
            <person name="Zuo D."/>
            <person name="Mohr S."/>
            <person name="Kane M.F."/>
            <person name="Williamson J."/>
            <person name="Simpson A.J.G."/>
            <person name="Bulyk M.L."/>
            <person name="Harlow E."/>
            <person name="Marsischky G."/>
            <person name="Kolodner R.D."/>
            <person name="LaBaer J."/>
        </authorList>
    </citation>
    <scope>NUCLEOTIDE SEQUENCE [GENOMIC DNA]</scope>
    <source>
        <strain>ATCC 204508 / S288c</strain>
    </source>
</reference>
<proteinExistence type="uncertain"/>
<name>YKN1_YEAST</name>
<protein>
    <recommendedName>
        <fullName>Putative uncharacterized protein YKL131W</fullName>
    </recommendedName>
</protein>
<organism>
    <name type="scientific">Saccharomyces cerevisiae (strain ATCC 204508 / S288c)</name>
    <name type="common">Baker's yeast</name>
    <dbReference type="NCBI Taxonomy" id="559292"/>
    <lineage>
        <taxon>Eukaryota</taxon>
        <taxon>Fungi</taxon>
        <taxon>Dikarya</taxon>
        <taxon>Ascomycota</taxon>
        <taxon>Saccharomycotina</taxon>
        <taxon>Saccharomycetes</taxon>
        <taxon>Saccharomycetales</taxon>
        <taxon>Saccharomycetaceae</taxon>
        <taxon>Saccharomyces</taxon>
    </lineage>
</organism>
<sequence length="173" mass="19761">MHHWQFFLAKYTRATLVSSSRLLHCNFKELSASISSFSILEYSIKEMASLLMLISSSLAFSKEDVVYLPIKTLCRCCPGCCNMDVKNLDTVSLPFVPAICRIDKLSWGFPTCSNKRFIRGKVCLPLISSICFLCNLLPAKRAILFYIKIVRKLVDLTQVSLRQEYKFKKSLLT</sequence>